<sequence>MNDKRKPSFQSAGKTFQERSVGEKYREKPTQNRPHFNDKFNGNRNEKSRFPRDKQEVKETRITQLSLSRAPSNKNAEQPKVQVTIKSTGTVYKTKEKKTGALSPRAPEKIKKNRAEEMKVYGENACLALFAERPESIVRLWATVQMSHKIGEVLSYLAENKKAYHVVDSEELARVSGTEHHGGICLLVKKPRAFTLQGYLDIPRNEDCLVLLDNVNNAQNIGGVLRTCAYFGVKNIVADNVENLYSAASMRVAEGGAEYIRVLEADYIDSALMQLRKSGYQIIHVSHNKQGDPLDKVRLKNKVVFVLSESSTESLATPEDTQARLTLASPIKSGLNIAVNAGVLLAKWYFR</sequence>
<accession>P44703</accession>
<feature type="chain" id="PRO_0000159816" description="Uncharacterized tRNA/rRNA methyltransferase HI_0424">
    <location>
        <begin position="1"/>
        <end position="351"/>
    </location>
</feature>
<feature type="region of interest" description="Disordered" evidence="1">
    <location>
        <begin position="1"/>
        <end position="61"/>
    </location>
</feature>
<feature type="compositionally biased region" description="Basic and acidic residues" evidence="1">
    <location>
        <begin position="16"/>
        <end position="38"/>
    </location>
</feature>
<feature type="compositionally biased region" description="Basic and acidic residues" evidence="1">
    <location>
        <begin position="44"/>
        <end position="61"/>
    </location>
</feature>
<protein>
    <recommendedName>
        <fullName>Uncharacterized tRNA/rRNA methyltransferase HI_0424</fullName>
        <ecNumber>2.1.1.-</ecNumber>
    </recommendedName>
</protein>
<gene>
    <name type="ordered locus">HI_0424</name>
</gene>
<evidence type="ECO:0000256" key="1">
    <source>
        <dbReference type="SAM" id="MobiDB-lite"/>
    </source>
</evidence>
<evidence type="ECO:0000305" key="2"/>
<dbReference type="EC" id="2.1.1.-"/>
<dbReference type="EMBL" id="L42023">
    <property type="protein sequence ID" value="AAC22080.1"/>
    <property type="molecule type" value="Genomic_DNA"/>
</dbReference>
<dbReference type="PIR" id="D64152">
    <property type="entry name" value="D64152"/>
</dbReference>
<dbReference type="RefSeq" id="NP_438585.1">
    <property type="nucleotide sequence ID" value="NC_000907.1"/>
</dbReference>
<dbReference type="SMR" id="P44703"/>
<dbReference type="STRING" id="71421.HI_0424"/>
<dbReference type="DNASU" id="949529"/>
<dbReference type="EnsemblBacteria" id="AAC22080">
    <property type="protein sequence ID" value="AAC22080"/>
    <property type="gene ID" value="HI_0424"/>
</dbReference>
<dbReference type="KEGG" id="hin:HI_0424"/>
<dbReference type="PATRIC" id="fig|71421.8.peg.444"/>
<dbReference type="eggNOG" id="COG0566">
    <property type="taxonomic scope" value="Bacteria"/>
</dbReference>
<dbReference type="HOGENOM" id="CLU_021322_2_1_6"/>
<dbReference type="OrthoDB" id="9785673at2"/>
<dbReference type="PhylomeDB" id="P44703"/>
<dbReference type="BioCyc" id="HINF71421:G1GJ1-439-MONOMER"/>
<dbReference type="Proteomes" id="UP000000579">
    <property type="component" value="Chromosome"/>
</dbReference>
<dbReference type="GO" id="GO:0005829">
    <property type="term" value="C:cytosol"/>
    <property type="evidence" value="ECO:0000318"/>
    <property type="project" value="GO_Central"/>
</dbReference>
<dbReference type="GO" id="GO:0003723">
    <property type="term" value="F:RNA binding"/>
    <property type="evidence" value="ECO:0007669"/>
    <property type="project" value="InterPro"/>
</dbReference>
<dbReference type="GO" id="GO:0008173">
    <property type="term" value="F:RNA methyltransferase activity"/>
    <property type="evidence" value="ECO:0000318"/>
    <property type="project" value="GO_Central"/>
</dbReference>
<dbReference type="GO" id="GO:0032259">
    <property type="term" value="P:methylation"/>
    <property type="evidence" value="ECO:0007669"/>
    <property type="project" value="UniProtKB-KW"/>
</dbReference>
<dbReference type="GO" id="GO:0006396">
    <property type="term" value="P:RNA processing"/>
    <property type="evidence" value="ECO:0007669"/>
    <property type="project" value="InterPro"/>
</dbReference>
<dbReference type="CDD" id="cd18095">
    <property type="entry name" value="SpoU-like_rRNA-MTase"/>
    <property type="match status" value="1"/>
</dbReference>
<dbReference type="Gene3D" id="3.30.1330.30">
    <property type="match status" value="1"/>
</dbReference>
<dbReference type="Gene3D" id="3.40.1280.10">
    <property type="match status" value="1"/>
</dbReference>
<dbReference type="InterPro" id="IPR029028">
    <property type="entry name" value="Alpha/beta_knot_MTases"/>
</dbReference>
<dbReference type="InterPro" id="IPR029064">
    <property type="entry name" value="Ribosomal_eL30-like_sf"/>
</dbReference>
<dbReference type="InterPro" id="IPR004441">
    <property type="entry name" value="rRNA_MeTrfase_TrmH"/>
</dbReference>
<dbReference type="InterPro" id="IPR001537">
    <property type="entry name" value="SpoU_MeTrfase"/>
</dbReference>
<dbReference type="InterPro" id="IPR013123">
    <property type="entry name" value="SpoU_subst-bd"/>
</dbReference>
<dbReference type="InterPro" id="IPR029026">
    <property type="entry name" value="tRNA_m1G_MTases_N"/>
</dbReference>
<dbReference type="InterPro" id="IPR016479">
    <property type="entry name" value="YfiF_prd"/>
</dbReference>
<dbReference type="NCBIfam" id="NF008117">
    <property type="entry name" value="PRK10864.1"/>
    <property type="match status" value="1"/>
</dbReference>
<dbReference type="PANTHER" id="PTHR46429">
    <property type="entry name" value="23S RRNA (GUANOSINE-2'-O-)-METHYLTRANSFERASE RLMB"/>
    <property type="match status" value="1"/>
</dbReference>
<dbReference type="PANTHER" id="PTHR46429:SF2">
    <property type="entry name" value="TRNA_RRNA METHYLTRANSFERASE"/>
    <property type="match status" value="1"/>
</dbReference>
<dbReference type="Pfam" id="PF00588">
    <property type="entry name" value="SpoU_methylase"/>
    <property type="match status" value="1"/>
</dbReference>
<dbReference type="Pfam" id="PF08032">
    <property type="entry name" value="SpoU_sub_bind"/>
    <property type="match status" value="1"/>
</dbReference>
<dbReference type="PIRSF" id="PIRSF006280">
    <property type="entry name" value="YfiF_prd"/>
    <property type="match status" value="1"/>
</dbReference>
<dbReference type="SMART" id="SM00967">
    <property type="entry name" value="SpoU_sub_bind"/>
    <property type="match status" value="1"/>
</dbReference>
<dbReference type="SUPFAM" id="SSF75217">
    <property type="entry name" value="alpha/beta knot"/>
    <property type="match status" value="1"/>
</dbReference>
<dbReference type="SUPFAM" id="SSF55315">
    <property type="entry name" value="L30e-like"/>
    <property type="match status" value="1"/>
</dbReference>
<reference key="1">
    <citation type="journal article" date="1995" name="Science">
        <title>Whole-genome random sequencing and assembly of Haemophilus influenzae Rd.</title>
        <authorList>
            <person name="Fleischmann R.D."/>
            <person name="Adams M.D."/>
            <person name="White O."/>
            <person name="Clayton R.A."/>
            <person name="Kirkness E.F."/>
            <person name="Kerlavage A.R."/>
            <person name="Bult C.J."/>
            <person name="Tomb J.-F."/>
            <person name="Dougherty B.A."/>
            <person name="Merrick J.M."/>
            <person name="McKenney K."/>
            <person name="Sutton G.G."/>
            <person name="FitzHugh W."/>
            <person name="Fields C.A."/>
            <person name="Gocayne J.D."/>
            <person name="Scott J.D."/>
            <person name="Shirley R."/>
            <person name="Liu L.-I."/>
            <person name="Glodek A."/>
            <person name="Kelley J.M."/>
            <person name="Weidman J.F."/>
            <person name="Phillips C.A."/>
            <person name="Spriggs T."/>
            <person name="Hedblom E."/>
            <person name="Cotton M.D."/>
            <person name="Utterback T.R."/>
            <person name="Hanna M.C."/>
            <person name="Nguyen D.T."/>
            <person name="Saudek D.M."/>
            <person name="Brandon R.C."/>
            <person name="Fine L.D."/>
            <person name="Fritchman J.L."/>
            <person name="Fuhrmann J.L."/>
            <person name="Geoghagen N.S.M."/>
            <person name="Gnehm C.L."/>
            <person name="McDonald L.A."/>
            <person name="Small K.V."/>
            <person name="Fraser C.M."/>
            <person name="Smith H.O."/>
            <person name="Venter J.C."/>
        </authorList>
    </citation>
    <scope>NUCLEOTIDE SEQUENCE [LARGE SCALE GENOMIC DNA]</scope>
    <source>
        <strain>ATCC 51907 / DSM 11121 / KW20 / Rd</strain>
    </source>
</reference>
<organism>
    <name type="scientific">Haemophilus influenzae (strain ATCC 51907 / DSM 11121 / KW20 / Rd)</name>
    <dbReference type="NCBI Taxonomy" id="71421"/>
    <lineage>
        <taxon>Bacteria</taxon>
        <taxon>Pseudomonadati</taxon>
        <taxon>Pseudomonadota</taxon>
        <taxon>Gammaproteobacteria</taxon>
        <taxon>Pasteurellales</taxon>
        <taxon>Pasteurellaceae</taxon>
        <taxon>Haemophilus</taxon>
    </lineage>
</organism>
<proteinExistence type="inferred from homology"/>
<name>Y424_HAEIN</name>
<keyword id="KW-0489">Methyltransferase</keyword>
<keyword id="KW-1185">Reference proteome</keyword>
<keyword id="KW-0808">Transferase</keyword>
<comment type="similarity">
    <text evidence="2">Belongs to the class IV-like SAM-binding methyltransferase superfamily. RNA methyltransferase TrmH family.</text>
</comment>